<sequence>MKLQTTYPSNNYPIFVEHGAIDHISTYIDQFDQSFILIDEHVNQYFADKFDDILSYENVHKVIIPAGEKTKTFEQYQETLEYILSHHVTRNTAIIAVGGGATGDFAGFVAATLLRGVHFIQVPTTILAHDSSVGGKVGINSKQGKNLIGAFYRPTAVIYDLDFLKTLPFEQILSGYAEVYKHALLNGESTTQEIEQHFKDREILQSLNGMDKYIAKGIETKLDIVVADEKEQGVRKFLNLGHTFGHAVEYNHKIAHGHAVMIGIIYQFIVANILFNSNHDIQHYINYLTKLGYPLETITDIDFETIYQYMLSDKKNDKQGVQMVLIKHFGDIVVQHIDQTTLQHACEQLKTYFK</sequence>
<comment type="function">
    <text evidence="1">Catalyzes the conversion of 3-deoxy-D-arabino-heptulosonate 7-phosphate (DAHP) to dehydroquinate (DHQ).</text>
</comment>
<comment type="catalytic activity">
    <reaction evidence="1">
        <text>7-phospho-2-dehydro-3-deoxy-D-arabino-heptonate = 3-dehydroquinate + phosphate</text>
        <dbReference type="Rhea" id="RHEA:21968"/>
        <dbReference type="ChEBI" id="CHEBI:32364"/>
        <dbReference type="ChEBI" id="CHEBI:43474"/>
        <dbReference type="ChEBI" id="CHEBI:58394"/>
        <dbReference type="EC" id="4.2.3.4"/>
    </reaction>
</comment>
<comment type="cofactor">
    <cofactor evidence="1">
        <name>Co(2+)</name>
        <dbReference type="ChEBI" id="CHEBI:48828"/>
    </cofactor>
    <cofactor evidence="1">
        <name>Zn(2+)</name>
        <dbReference type="ChEBI" id="CHEBI:29105"/>
    </cofactor>
    <text evidence="1">Binds 1 divalent metal cation per subunit. Can use either Co(2+) or Zn(2+).</text>
</comment>
<comment type="cofactor">
    <cofactor evidence="1">
        <name>NAD(+)</name>
        <dbReference type="ChEBI" id="CHEBI:57540"/>
    </cofactor>
</comment>
<comment type="pathway">
    <text evidence="1">Metabolic intermediate biosynthesis; chorismate biosynthesis; chorismate from D-erythrose 4-phosphate and phosphoenolpyruvate: step 2/7.</text>
</comment>
<comment type="subcellular location">
    <subcellularLocation>
        <location evidence="1">Cytoplasm</location>
    </subcellularLocation>
</comment>
<comment type="similarity">
    <text evidence="1">Belongs to the sugar phosphate cyclases superfamily. Dehydroquinate synthase family.</text>
</comment>
<feature type="chain" id="PRO_1000094630" description="3-dehydroquinate synthase">
    <location>
        <begin position="1"/>
        <end position="354"/>
    </location>
</feature>
<feature type="binding site" evidence="1">
    <location>
        <begin position="100"/>
        <end position="104"/>
    </location>
    <ligand>
        <name>NAD(+)</name>
        <dbReference type="ChEBI" id="CHEBI:57540"/>
    </ligand>
</feature>
<feature type="binding site" evidence="1">
    <location>
        <begin position="124"/>
        <end position="125"/>
    </location>
    <ligand>
        <name>NAD(+)</name>
        <dbReference type="ChEBI" id="CHEBI:57540"/>
    </ligand>
</feature>
<feature type="binding site" evidence="1">
    <location>
        <position position="136"/>
    </location>
    <ligand>
        <name>NAD(+)</name>
        <dbReference type="ChEBI" id="CHEBI:57540"/>
    </ligand>
</feature>
<feature type="binding site" evidence="1">
    <location>
        <position position="145"/>
    </location>
    <ligand>
        <name>NAD(+)</name>
        <dbReference type="ChEBI" id="CHEBI:57540"/>
    </ligand>
</feature>
<feature type="binding site" evidence="1">
    <location>
        <begin position="163"/>
        <end position="166"/>
    </location>
    <ligand>
        <name>NAD(+)</name>
        <dbReference type="ChEBI" id="CHEBI:57540"/>
    </ligand>
</feature>
<feature type="binding site" evidence="1">
    <location>
        <position position="178"/>
    </location>
    <ligand>
        <name>Zn(2+)</name>
        <dbReference type="ChEBI" id="CHEBI:29105"/>
    </ligand>
</feature>
<feature type="binding site" evidence="1">
    <location>
        <position position="242"/>
    </location>
    <ligand>
        <name>Zn(2+)</name>
        <dbReference type="ChEBI" id="CHEBI:29105"/>
    </ligand>
</feature>
<feature type="binding site" evidence="1">
    <location>
        <position position="256"/>
    </location>
    <ligand>
        <name>Zn(2+)</name>
        <dbReference type="ChEBI" id="CHEBI:29105"/>
    </ligand>
</feature>
<proteinExistence type="inferred from homology"/>
<protein>
    <recommendedName>
        <fullName evidence="1">3-dehydroquinate synthase</fullName>
        <shortName evidence="1">DHQS</shortName>
        <ecNumber evidence="1">4.2.3.4</ecNumber>
    </recommendedName>
</protein>
<accession>A5ISZ5</accession>
<name>AROB_STAA9</name>
<organism>
    <name type="scientific">Staphylococcus aureus (strain JH9)</name>
    <dbReference type="NCBI Taxonomy" id="359786"/>
    <lineage>
        <taxon>Bacteria</taxon>
        <taxon>Bacillati</taxon>
        <taxon>Bacillota</taxon>
        <taxon>Bacilli</taxon>
        <taxon>Bacillales</taxon>
        <taxon>Staphylococcaceae</taxon>
        <taxon>Staphylococcus</taxon>
    </lineage>
</organism>
<keyword id="KW-0028">Amino-acid biosynthesis</keyword>
<keyword id="KW-0057">Aromatic amino acid biosynthesis</keyword>
<keyword id="KW-0170">Cobalt</keyword>
<keyword id="KW-0963">Cytoplasm</keyword>
<keyword id="KW-0456">Lyase</keyword>
<keyword id="KW-0479">Metal-binding</keyword>
<keyword id="KW-0520">NAD</keyword>
<keyword id="KW-0547">Nucleotide-binding</keyword>
<keyword id="KW-0862">Zinc</keyword>
<dbReference type="EC" id="4.2.3.4" evidence="1"/>
<dbReference type="EMBL" id="CP000703">
    <property type="protein sequence ID" value="ABQ49318.1"/>
    <property type="molecule type" value="Genomic_DNA"/>
</dbReference>
<dbReference type="RefSeq" id="WP_000776312.1">
    <property type="nucleotide sequence ID" value="NC_009487.1"/>
</dbReference>
<dbReference type="SMR" id="A5ISZ5"/>
<dbReference type="KEGG" id="saj:SaurJH9_1524"/>
<dbReference type="HOGENOM" id="CLU_001201_0_1_9"/>
<dbReference type="UniPathway" id="UPA00053">
    <property type="reaction ID" value="UER00085"/>
</dbReference>
<dbReference type="GO" id="GO:0005737">
    <property type="term" value="C:cytoplasm"/>
    <property type="evidence" value="ECO:0007669"/>
    <property type="project" value="UniProtKB-SubCell"/>
</dbReference>
<dbReference type="GO" id="GO:0003856">
    <property type="term" value="F:3-dehydroquinate synthase activity"/>
    <property type="evidence" value="ECO:0007669"/>
    <property type="project" value="UniProtKB-UniRule"/>
</dbReference>
<dbReference type="GO" id="GO:0046872">
    <property type="term" value="F:metal ion binding"/>
    <property type="evidence" value="ECO:0007669"/>
    <property type="project" value="UniProtKB-KW"/>
</dbReference>
<dbReference type="GO" id="GO:0000166">
    <property type="term" value="F:nucleotide binding"/>
    <property type="evidence" value="ECO:0007669"/>
    <property type="project" value="UniProtKB-KW"/>
</dbReference>
<dbReference type="GO" id="GO:0008652">
    <property type="term" value="P:amino acid biosynthetic process"/>
    <property type="evidence" value="ECO:0007669"/>
    <property type="project" value="UniProtKB-KW"/>
</dbReference>
<dbReference type="GO" id="GO:0009073">
    <property type="term" value="P:aromatic amino acid family biosynthetic process"/>
    <property type="evidence" value="ECO:0007669"/>
    <property type="project" value="UniProtKB-KW"/>
</dbReference>
<dbReference type="GO" id="GO:0009423">
    <property type="term" value="P:chorismate biosynthetic process"/>
    <property type="evidence" value="ECO:0007669"/>
    <property type="project" value="UniProtKB-UniRule"/>
</dbReference>
<dbReference type="FunFam" id="3.40.50.1970:FF:000019">
    <property type="entry name" value="3-dehydroquinate synthase"/>
    <property type="match status" value="1"/>
</dbReference>
<dbReference type="Gene3D" id="3.40.50.1970">
    <property type="match status" value="1"/>
</dbReference>
<dbReference type="Gene3D" id="1.20.1090.10">
    <property type="entry name" value="Dehydroquinate synthase-like - alpha domain"/>
    <property type="match status" value="1"/>
</dbReference>
<dbReference type="HAMAP" id="MF_00110">
    <property type="entry name" value="DHQ_synthase"/>
    <property type="match status" value="1"/>
</dbReference>
<dbReference type="InterPro" id="IPR050071">
    <property type="entry name" value="Dehydroquinate_synthase"/>
</dbReference>
<dbReference type="InterPro" id="IPR016037">
    <property type="entry name" value="DHQ_synth_AroB"/>
</dbReference>
<dbReference type="InterPro" id="IPR030963">
    <property type="entry name" value="DHQ_synth_fam"/>
</dbReference>
<dbReference type="InterPro" id="IPR030960">
    <property type="entry name" value="DHQS/DOIS_N"/>
</dbReference>
<dbReference type="InterPro" id="IPR056179">
    <property type="entry name" value="DHQS_C"/>
</dbReference>
<dbReference type="NCBIfam" id="TIGR01357">
    <property type="entry name" value="aroB"/>
    <property type="match status" value="1"/>
</dbReference>
<dbReference type="PANTHER" id="PTHR43622">
    <property type="entry name" value="3-DEHYDROQUINATE SYNTHASE"/>
    <property type="match status" value="1"/>
</dbReference>
<dbReference type="PANTHER" id="PTHR43622:SF7">
    <property type="entry name" value="3-DEHYDROQUINATE SYNTHASE, CHLOROPLASTIC"/>
    <property type="match status" value="1"/>
</dbReference>
<dbReference type="Pfam" id="PF01761">
    <property type="entry name" value="DHQ_synthase"/>
    <property type="match status" value="1"/>
</dbReference>
<dbReference type="Pfam" id="PF24621">
    <property type="entry name" value="DHQS_C"/>
    <property type="match status" value="1"/>
</dbReference>
<dbReference type="PIRSF" id="PIRSF001455">
    <property type="entry name" value="DHQ_synth"/>
    <property type="match status" value="1"/>
</dbReference>
<dbReference type="SUPFAM" id="SSF56796">
    <property type="entry name" value="Dehydroquinate synthase-like"/>
    <property type="match status" value="1"/>
</dbReference>
<reference key="1">
    <citation type="submission" date="2007-05" db="EMBL/GenBank/DDBJ databases">
        <title>Complete sequence of chromosome of Staphylococcus aureus subsp. aureus JH9.</title>
        <authorList>
            <consortium name="US DOE Joint Genome Institute"/>
            <person name="Copeland A."/>
            <person name="Lucas S."/>
            <person name="Lapidus A."/>
            <person name="Barry K."/>
            <person name="Detter J.C."/>
            <person name="Glavina del Rio T."/>
            <person name="Hammon N."/>
            <person name="Israni S."/>
            <person name="Pitluck S."/>
            <person name="Chain P."/>
            <person name="Malfatti S."/>
            <person name="Shin M."/>
            <person name="Vergez L."/>
            <person name="Schmutz J."/>
            <person name="Larimer F."/>
            <person name="Land M."/>
            <person name="Hauser L."/>
            <person name="Kyrpides N."/>
            <person name="Kim E."/>
            <person name="Tomasz A."/>
            <person name="Richardson P."/>
        </authorList>
    </citation>
    <scope>NUCLEOTIDE SEQUENCE [LARGE SCALE GENOMIC DNA]</scope>
    <source>
        <strain>JH9</strain>
    </source>
</reference>
<gene>
    <name evidence="1" type="primary">aroB</name>
    <name type="ordered locus">SaurJH9_1524</name>
</gene>
<evidence type="ECO:0000255" key="1">
    <source>
        <dbReference type="HAMAP-Rule" id="MF_00110"/>
    </source>
</evidence>